<organism>
    <name type="scientific">Daboia siamensis</name>
    <name type="common">Eastern Russel's viper</name>
    <name type="synonym">Daboia russelii siamensis</name>
    <dbReference type="NCBI Taxonomy" id="343250"/>
    <lineage>
        <taxon>Eukaryota</taxon>
        <taxon>Metazoa</taxon>
        <taxon>Chordata</taxon>
        <taxon>Craniata</taxon>
        <taxon>Vertebrata</taxon>
        <taxon>Euteleostomi</taxon>
        <taxon>Lepidosauria</taxon>
        <taxon>Squamata</taxon>
        <taxon>Bifurcata</taxon>
        <taxon>Unidentata</taxon>
        <taxon>Episquamata</taxon>
        <taxon>Toxicofera</taxon>
        <taxon>Serpentes</taxon>
        <taxon>Colubroidea</taxon>
        <taxon>Viperidae</taxon>
        <taxon>Viperinae</taxon>
        <taxon>Daboia</taxon>
    </lineage>
</organism>
<accession>A8CG82</accession>
<dbReference type="EC" id="3.1.1.4"/>
<dbReference type="EMBL" id="DQ090656">
    <property type="protein sequence ID" value="AAZ53178.1"/>
    <property type="molecule type" value="mRNA"/>
</dbReference>
<dbReference type="SMR" id="A8CG82"/>
<dbReference type="GO" id="GO:0005576">
    <property type="term" value="C:extracellular region"/>
    <property type="evidence" value="ECO:0007669"/>
    <property type="project" value="UniProtKB-SubCell"/>
</dbReference>
<dbReference type="GO" id="GO:0005509">
    <property type="term" value="F:calcium ion binding"/>
    <property type="evidence" value="ECO:0007669"/>
    <property type="project" value="InterPro"/>
</dbReference>
<dbReference type="GO" id="GO:0047498">
    <property type="term" value="F:calcium-dependent phospholipase A2 activity"/>
    <property type="evidence" value="ECO:0007669"/>
    <property type="project" value="TreeGrafter"/>
</dbReference>
<dbReference type="GO" id="GO:0005543">
    <property type="term" value="F:phospholipid binding"/>
    <property type="evidence" value="ECO:0007669"/>
    <property type="project" value="TreeGrafter"/>
</dbReference>
<dbReference type="GO" id="GO:0090729">
    <property type="term" value="F:toxin activity"/>
    <property type="evidence" value="ECO:0007669"/>
    <property type="project" value="UniProtKB-KW"/>
</dbReference>
<dbReference type="GO" id="GO:0050482">
    <property type="term" value="P:arachidonate secretion"/>
    <property type="evidence" value="ECO:0007669"/>
    <property type="project" value="InterPro"/>
</dbReference>
<dbReference type="GO" id="GO:0016042">
    <property type="term" value="P:lipid catabolic process"/>
    <property type="evidence" value="ECO:0007669"/>
    <property type="project" value="UniProtKB-KW"/>
</dbReference>
<dbReference type="GO" id="GO:0042130">
    <property type="term" value="P:negative regulation of T cell proliferation"/>
    <property type="evidence" value="ECO:0007669"/>
    <property type="project" value="TreeGrafter"/>
</dbReference>
<dbReference type="GO" id="GO:0006644">
    <property type="term" value="P:phospholipid metabolic process"/>
    <property type="evidence" value="ECO:0007669"/>
    <property type="project" value="InterPro"/>
</dbReference>
<dbReference type="CDD" id="cd00125">
    <property type="entry name" value="PLA2c"/>
    <property type="match status" value="1"/>
</dbReference>
<dbReference type="FunFam" id="1.20.90.10:FF:000001">
    <property type="entry name" value="Basic phospholipase A2 homolog"/>
    <property type="match status" value="1"/>
</dbReference>
<dbReference type="Gene3D" id="1.20.90.10">
    <property type="entry name" value="Phospholipase A2 domain"/>
    <property type="match status" value="1"/>
</dbReference>
<dbReference type="InterPro" id="IPR001211">
    <property type="entry name" value="PLipase_A2"/>
</dbReference>
<dbReference type="InterPro" id="IPR033112">
    <property type="entry name" value="PLipase_A2_Asp_AS"/>
</dbReference>
<dbReference type="InterPro" id="IPR016090">
    <property type="entry name" value="PLipase_A2_dom"/>
</dbReference>
<dbReference type="InterPro" id="IPR036444">
    <property type="entry name" value="PLipase_A2_dom_sf"/>
</dbReference>
<dbReference type="InterPro" id="IPR033113">
    <property type="entry name" value="PLipase_A2_His_AS"/>
</dbReference>
<dbReference type="PANTHER" id="PTHR11716">
    <property type="entry name" value="PHOSPHOLIPASE A2 FAMILY MEMBER"/>
    <property type="match status" value="1"/>
</dbReference>
<dbReference type="PANTHER" id="PTHR11716:SF9">
    <property type="entry name" value="PHOSPHOLIPASE A2, MEMBRANE ASSOCIATED"/>
    <property type="match status" value="1"/>
</dbReference>
<dbReference type="Pfam" id="PF00068">
    <property type="entry name" value="Phospholip_A2_1"/>
    <property type="match status" value="1"/>
</dbReference>
<dbReference type="PRINTS" id="PR00389">
    <property type="entry name" value="PHPHLIPASEA2"/>
</dbReference>
<dbReference type="SMART" id="SM00085">
    <property type="entry name" value="PA2c"/>
    <property type="match status" value="1"/>
</dbReference>
<dbReference type="SUPFAM" id="SSF48619">
    <property type="entry name" value="Phospholipase A2, PLA2"/>
    <property type="match status" value="1"/>
</dbReference>
<dbReference type="PROSITE" id="PS00119">
    <property type="entry name" value="PA2_ASP"/>
    <property type="match status" value="1"/>
</dbReference>
<dbReference type="PROSITE" id="PS00118">
    <property type="entry name" value="PA2_HIS"/>
    <property type="match status" value="1"/>
</dbReference>
<evidence type="ECO:0000250" key="1"/>
<evidence type="ECO:0000255" key="2">
    <source>
        <dbReference type="PROSITE-ProRule" id="PRU10035"/>
    </source>
</evidence>
<evidence type="ECO:0000255" key="3">
    <source>
        <dbReference type="PROSITE-ProRule" id="PRU10036"/>
    </source>
</evidence>
<evidence type="ECO:0000269" key="4">
    <source>
    </source>
</evidence>
<evidence type="ECO:0000305" key="5"/>
<evidence type="ECO:0000305" key="6">
    <source>
    </source>
</evidence>
<feature type="signal peptide" evidence="4">
    <location>
        <begin position="1"/>
        <end position="16"/>
    </location>
</feature>
<feature type="chain" id="PRO_0000419220" description="Basic phospholipase A2 DsM-b1/DsM-b1'">
    <location>
        <begin position="17"/>
        <end position="138"/>
    </location>
</feature>
<feature type="active site" evidence="1">
    <location>
        <position position="63"/>
    </location>
</feature>
<feature type="active site" evidence="1">
    <location>
        <position position="105"/>
    </location>
</feature>
<feature type="binding site" evidence="1">
    <location>
        <position position="43"/>
    </location>
    <ligand>
        <name>Ca(2+)</name>
        <dbReference type="ChEBI" id="CHEBI:29108"/>
    </ligand>
</feature>
<feature type="binding site" evidence="1">
    <location>
        <position position="45"/>
    </location>
    <ligand>
        <name>Ca(2+)</name>
        <dbReference type="ChEBI" id="CHEBI:29108"/>
    </ligand>
</feature>
<feature type="binding site" evidence="1">
    <location>
        <position position="47"/>
    </location>
    <ligand>
        <name>Ca(2+)</name>
        <dbReference type="ChEBI" id="CHEBI:29108"/>
    </ligand>
</feature>
<feature type="binding site" evidence="1">
    <location>
        <position position="64"/>
    </location>
    <ligand>
        <name>Ca(2+)</name>
        <dbReference type="ChEBI" id="CHEBI:29108"/>
    </ligand>
</feature>
<feature type="disulfide bond" evidence="1">
    <location>
        <begin position="42"/>
        <end position="131"/>
    </location>
</feature>
<feature type="disulfide bond" evidence="1">
    <location>
        <begin position="44"/>
        <end position="60"/>
    </location>
</feature>
<feature type="disulfide bond" evidence="1">
    <location>
        <begin position="59"/>
        <end position="111"/>
    </location>
</feature>
<feature type="disulfide bond" evidence="1">
    <location>
        <begin position="65"/>
        <end position="138"/>
    </location>
</feature>
<feature type="disulfide bond" evidence="1">
    <location>
        <begin position="66"/>
        <end position="104"/>
    </location>
</feature>
<feature type="disulfide bond" evidence="1">
    <location>
        <begin position="73"/>
        <end position="97"/>
    </location>
</feature>
<feature type="disulfide bond" evidence="1">
    <location>
        <begin position="91"/>
        <end position="102"/>
    </location>
</feature>
<sequence>MRTLWIVAMCLIGVEGNLFQFARLIDAKQEAFSFFKYISYGCYCGWGGQGTPKDATDRCCFVHDCCYARVKGCNPKLVEYSYGYRTGKIVCENYNRCKRAVCECDRVAAICLGQNVNTYNKGYMFLSSYYCRQKSEQC</sequence>
<reference key="1">
    <citation type="journal article" date="2007" name="Biochim. Biophys. Acta">
        <title>Venom phospholipases of Russell's vipers from Myanmar and eastern India--cloning, characterization and phylogeographic analysis.</title>
        <authorList>
            <person name="Tsai I.-H."/>
            <person name="Tsai H.-Y."/>
            <person name="Wang Y.-M."/>
            <person name="Pe T."/>
            <person name="Warrell D.-A."/>
        </authorList>
    </citation>
    <scope>NUCLEOTIDE SEQUENCE [MRNA]</scope>
    <scope>PROTEIN SEQUENCE OF 17-27</scope>
    <scope>FUNCTION</scope>
    <scope>MASS SPECTROMETRY</scope>
    <scope>SUBCELLULAR LOCATION</scope>
    <source>
        <strain>Myanmar</strain>
        <tissue>Venom</tissue>
        <tissue>Venom gland</tissue>
    </source>
</reference>
<name>PA2B1_DABSI</name>
<protein>
    <recommendedName>
        <fullName>Basic phospholipase A2 DsM-b1/DsM-b1'</fullName>
        <shortName>svPLA2</shortName>
        <ecNumber>3.1.1.4</ecNumber>
    </recommendedName>
    <alternativeName>
        <fullName>Phosphatidylcholine 2-acylhydrolase</fullName>
    </alternativeName>
</protein>
<comment type="function">
    <text evidence="4">Exhibits high hydrolytic activities and shows strong preference for the anionic micelles (dPPC with deoxycholate) to the zwitterionic micelles (dPPC with Triton X-100). PLA2 catalyzes the calcium-dependent hydrolysis of the 2-acyl groups in 3-sn-phosphoglycerides.</text>
</comment>
<comment type="catalytic activity">
    <reaction evidence="2 3">
        <text>a 1,2-diacyl-sn-glycero-3-phosphocholine + H2O = a 1-acyl-sn-glycero-3-phosphocholine + a fatty acid + H(+)</text>
        <dbReference type="Rhea" id="RHEA:15801"/>
        <dbReference type="ChEBI" id="CHEBI:15377"/>
        <dbReference type="ChEBI" id="CHEBI:15378"/>
        <dbReference type="ChEBI" id="CHEBI:28868"/>
        <dbReference type="ChEBI" id="CHEBI:57643"/>
        <dbReference type="ChEBI" id="CHEBI:58168"/>
        <dbReference type="EC" id="3.1.1.4"/>
    </reaction>
</comment>
<comment type="cofactor">
    <cofactor evidence="1">
        <name>Ca(2+)</name>
        <dbReference type="ChEBI" id="CHEBI:29108"/>
    </cofactor>
    <text evidence="1">Binds 1 Ca(2+) ion.</text>
</comment>
<comment type="subcellular location">
    <subcellularLocation>
        <location evidence="4">Secreted</location>
    </subcellularLocation>
</comment>
<comment type="tissue specificity">
    <text evidence="6">Expressed by the venom gland.</text>
</comment>
<comment type="mass spectrometry"/>
<comment type="similarity">
    <text evidence="5">Belongs to the phospholipase A2 family. Group II subfamily. D49 sub-subfamily.</text>
</comment>
<comment type="caution">
    <text evidence="6">Sequence obtained after translation (DsM-b1) and sequence directly sequenced from protein (Dsm-b1', AA 17-27) correspond exactly. However, the mass found for the protein (14084) does not correspond to the expected mass calculated after translation (14055) (PubMed:17611171).</text>
</comment>
<proteinExistence type="evidence at protein level"/>
<keyword id="KW-0903">Direct protein sequencing</keyword>
<keyword id="KW-1015">Disulfide bond</keyword>
<keyword id="KW-0378">Hydrolase</keyword>
<keyword id="KW-0442">Lipid degradation</keyword>
<keyword id="KW-0443">Lipid metabolism</keyword>
<keyword id="KW-0479">Metal-binding</keyword>
<keyword id="KW-0964">Secreted</keyword>
<keyword id="KW-0732">Signal</keyword>
<keyword id="KW-0800">Toxin</keyword>